<dbReference type="EMBL" id="EF134360">
    <property type="protein sequence ID" value="ABV22474.1"/>
    <property type="molecule type" value="mRNA"/>
</dbReference>
<dbReference type="SMR" id="A7WQL9"/>
<dbReference type="GO" id="GO:0005634">
    <property type="term" value="C:nucleus"/>
    <property type="evidence" value="ECO:0007669"/>
    <property type="project" value="InterPro"/>
</dbReference>
<dbReference type="InterPro" id="IPR020186">
    <property type="entry name" value="Meiosis-expressed_gene_1"/>
</dbReference>
<dbReference type="PANTHER" id="PTHR17008:SF1">
    <property type="entry name" value="MEIOSIS EXPRESSED GENE 1 PROTEIN HOMOLOG"/>
    <property type="match status" value="1"/>
</dbReference>
<dbReference type="PANTHER" id="PTHR17008">
    <property type="entry name" value="MEIOSIS-EXPRESSED GENE 1 PROTEIN"/>
    <property type="match status" value="1"/>
</dbReference>
<dbReference type="Pfam" id="PF15163">
    <property type="entry name" value="Meiosis_expr"/>
    <property type="match status" value="1"/>
</dbReference>
<accession>A7WQL9</accession>
<reference key="1">
    <citation type="journal article" date="2007" name="Proc. Natl. Acad. Sci. U.S.A.">
        <title>Spliced leader RNA trans-splicing in dinoflagellates.</title>
        <authorList>
            <person name="Zhang H."/>
            <person name="Hou Y."/>
            <person name="Miranda L."/>
            <person name="Campbell D.A."/>
            <person name="Sturm N.R."/>
            <person name="Gaasterland T."/>
            <person name="Lin S."/>
        </authorList>
    </citation>
    <scope>NUCLEOTIDE SEQUENCE [MRNA]</scope>
    <source>
        <strain>Om-5p-35</strain>
    </source>
</reference>
<organism>
    <name type="scientific">Oxyrrhis marina</name>
    <name type="common">Dinoflagellate</name>
    <dbReference type="NCBI Taxonomy" id="2969"/>
    <lineage>
        <taxon>Eukaryota</taxon>
        <taxon>Sar</taxon>
        <taxon>Alveolata</taxon>
        <taxon>Dinophyceae</taxon>
        <taxon>Oxyrrhinales</taxon>
        <taxon>Oxyrrhinaceae</taxon>
        <taxon>Oxyrrhis</taxon>
    </lineage>
</organism>
<comment type="similarity">
    <text evidence="2">Belongs to the MEIG1 family.</text>
</comment>
<feature type="chain" id="PRO_0000313028" description="Meiosis expressed gene 1 protein homolog">
    <location>
        <begin position="1"/>
        <end position="120"/>
    </location>
</feature>
<feature type="region of interest" description="Disordered" evidence="1">
    <location>
        <begin position="1"/>
        <end position="45"/>
    </location>
</feature>
<feature type="compositionally biased region" description="Basic and acidic residues" evidence="1">
    <location>
        <begin position="28"/>
        <end position="45"/>
    </location>
</feature>
<sequence>MDGLAIGGVSAPMTAERPQQVKKQLSRRTPDAADGRKPTRMERAKAWTPEIEDQFRLQNSGFKSLDEYVDMYGEPERWPNELGGFISKTQLKSNGYFVYWRKFRECEDKHLAQVKIYYYD</sequence>
<evidence type="ECO:0000256" key="1">
    <source>
        <dbReference type="SAM" id="MobiDB-lite"/>
    </source>
</evidence>
<evidence type="ECO:0000305" key="2"/>
<proteinExistence type="evidence at transcript level"/>
<protein>
    <recommendedName>
        <fullName>Meiosis expressed gene 1 protein homolog</fullName>
    </recommendedName>
</protein>
<name>MEIG1_OXYMA</name>